<feature type="chain" id="PRO_0000065911" description="Protein VraC">
    <location>
        <begin position="1"/>
        <end position="121"/>
    </location>
</feature>
<name>VRAC_STAAM</name>
<dbReference type="EMBL" id="BA000017">
    <property type="protein sequence ID" value="BAB56739.1"/>
    <property type="molecule type" value="Genomic_DNA"/>
</dbReference>
<dbReference type="RefSeq" id="WP_001165058.1">
    <property type="nucleotide sequence ID" value="NC_002758.2"/>
</dbReference>
<dbReference type="SMR" id="Q7A2W8"/>
<dbReference type="KEGG" id="sav:SAV0577"/>
<dbReference type="HOGENOM" id="CLU_2195295_0_0_9"/>
<dbReference type="Proteomes" id="UP000002481">
    <property type="component" value="Chromosome"/>
</dbReference>
<dbReference type="InterPro" id="IPR016994">
    <property type="entry name" value="UCP032370_VraC"/>
</dbReference>
<dbReference type="PIRSF" id="PIRSF032370">
    <property type="entry name" value="UCP032370_VraC"/>
    <property type="match status" value="1"/>
</dbReference>
<gene>
    <name type="primary">vraC</name>
    <name type="ordered locus">SAV0577</name>
</gene>
<reference key="1">
    <citation type="journal article" date="2001" name="Lancet">
        <title>Whole genome sequencing of meticillin-resistant Staphylococcus aureus.</title>
        <authorList>
            <person name="Kuroda M."/>
            <person name="Ohta T."/>
            <person name="Uchiyama I."/>
            <person name="Baba T."/>
            <person name="Yuzawa H."/>
            <person name="Kobayashi I."/>
            <person name="Cui L."/>
            <person name="Oguchi A."/>
            <person name="Aoki K."/>
            <person name="Nagai Y."/>
            <person name="Lian J.-Q."/>
            <person name="Ito T."/>
            <person name="Kanamori M."/>
            <person name="Matsumaru H."/>
            <person name="Maruyama A."/>
            <person name="Murakami H."/>
            <person name="Hosoyama A."/>
            <person name="Mizutani-Ui Y."/>
            <person name="Takahashi N.K."/>
            <person name="Sawano T."/>
            <person name="Inoue R."/>
            <person name="Kaito C."/>
            <person name="Sekimizu K."/>
            <person name="Hirakawa H."/>
            <person name="Kuhara S."/>
            <person name="Goto S."/>
            <person name="Yabuzaki J."/>
            <person name="Kanehisa M."/>
            <person name="Yamashita A."/>
            <person name="Oshima K."/>
            <person name="Furuya K."/>
            <person name="Yoshino C."/>
            <person name="Shiba T."/>
            <person name="Hattori M."/>
            <person name="Ogasawara N."/>
            <person name="Hayashi H."/>
            <person name="Hiramatsu K."/>
        </authorList>
    </citation>
    <scope>NUCLEOTIDE SEQUENCE [LARGE SCALE GENOMIC DNA]</scope>
    <source>
        <strain>Mu50 / ATCC 700699</strain>
    </source>
</reference>
<reference key="2">
    <citation type="journal article" date="2000" name="Biochem. Biophys. Res. Commun.">
        <title>Identification of the up- and down-regulated genes in vancomycin-resistant Staphylococcus aureus strains Mu3 and Mu50 by cDNA differential hybridization method.</title>
        <authorList>
            <person name="Kuroda M."/>
            <person name="Kuwahara-Arai K."/>
            <person name="Hiramatsu K."/>
        </authorList>
    </citation>
    <scope>VANCOMYCIN RESISTANCE</scope>
</reference>
<organism>
    <name type="scientific">Staphylococcus aureus (strain Mu50 / ATCC 700699)</name>
    <dbReference type="NCBI Taxonomy" id="158878"/>
    <lineage>
        <taxon>Bacteria</taxon>
        <taxon>Bacillati</taxon>
        <taxon>Bacillota</taxon>
        <taxon>Bacilli</taxon>
        <taxon>Bacillales</taxon>
        <taxon>Staphylococcaceae</taxon>
        <taxon>Staphylococcus</taxon>
    </lineage>
</organism>
<sequence length="121" mass="14187">MQHYLLDSNQRLNVSFSKDSVAAYYQCFNQPYRKEVPPLMCASLWPKFDLFKKYANSELILTKSAINQTQKIEVDTIYVGHLEDIECRQTRNITRYTMALTLTKNDQHVITVTQTFIKAMK</sequence>
<protein>
    <recommendedName>
        <fullName>Protein VraC</fullName>
    </recommendedName>
</protein>
<proteinExistence type="predicted"/>
<accession>Q7A2W8</accession>
<comment type="miscellaneous">
    <text>May contribute to vancomycin resistance.</text>
</comment>